<accession>Q8UHH1</accession>
<accession>Q7D0V4</accession>
<evidence type="ECO:0000255" key="1">
    <source>
        <dbReference type="HAMAP-Rule" id="MF_01522"/>
    </source>
</evidence>
<protein>
    <recommendedName>
        <fullName evidence="1">Probable potassium transport system protein Kup 1</fullName>
    </recommendedName>
</protein>
<dbReference type="EMBL" id="AE007869">
    <property type="protein sequence ID" value="AAK86521.1"/>
    <property type="molecule type" value="Genomic_DNA"/>
</dbReference>
<dbReference type="PIR" id="AI2663">
    <property type="entry name" value="AI2663"/>
</dbReference>
<dbReference type="PIR" id="H97445">
    <property type="entry name" value="H97445"/>
</dbReference>
<dbReference type="RefSeq" id="NP_353736.1">
    <property type="nucleotide sequence ID" value="NC_003062.2"/>
</dbReference>
<dbReference type="STRING" id="176299.Atu0711"/>
<dbReference type="EnsemblBacteria" id="AAK86521">
    <property type="protein sequence ID" value="AAK86521"/>
    <property type="gene ID" value="Atu0711"/>
</dbReference>
<dbReference type="KEGG" id="atu:Atu0711"/>
<dbReference type="PATRIC" id="fig|176299.10.peg.709"/>
<dbReference type="eggNOG" id="COG3158">
    <property type="taxonomic scope" value="Bacteria"/>
</dbReference>
<dbReference type="HOGENOM" id="CLU_008142_4_2_5"/>
<dbReference type="OrthoDB" id="9805577at2"/>
<dbReference type="PhylomeDB" id="Q8UHH1"/>
<dbReference type="BioCyc" id="AGRO:ATU0711-MONOMER"/>
<dbReference type="Proteomes" id="UP000000813">
    <property type="component" value="Chromosome circular"/>
</dbReference>
<dbReference type="GO" id="GO:0005886">
    <property type="term" value="C:plasma membrane"/>
    <property type="evidence" value="ECO:0007669"/>
    <property type="project" value="UniProtKB-SubCell"/>
</dbReference>
<dbReference type="GO" id="GO:0015079">
    <property type="term" value="F:potassium ion transmembrane transporter activity"/>
    <property type="evidence" value="ECO:0007669"/>
    <property type="project" value="UniProtKB-UniRule"/>
</dbReference>
<dbReference type="GO" id="GO:0015293">
    <property type="term" value="F:symporter activity"/>
    <property type="evidence" value="ECO:0007669"/>
    <property type="project" value="UniProtKB-UniRule"/>
</dbReference>
<dbReference type="HAMAP" id="MF_01522">
    <property type="entry name" value="Kup"/>
    <property type="match status" value="1"/>
</dbReference>
<dbReference type="InterPro" id="IPR003855">
    <property type="entry name" value="K+_transporter"/>
</dbReference>
<dbReference type="InterPro" id="IPR053952">
    <property type="entry name" value="K_trans_C"/>
</dbReference>
<dbReference type="InterPro" id="IPR053951">
    <property type="entry name" value="K_trans_N"/>
</dbReference>
<dbReference type="InterPro" id="IPR023051">
    <property type="entry name" value="Kup"/>
</dbReference>
<dbReference type="PANTHER" id="PTHR30540:SF79">
    <property type="entry name" value="LOW AFFINITY POTASSIUM TRANSPORT SYSTEM PROTEIN KUP"/>
    <property type="match status" value="1"/>
</dbReference>
<dbReference type="PANTHER" id="PTHR30540">
    <property type="entry name" value="OSMOTIC STRESS POTASSIUM TRANSPORTER"/>
    <property type="match status" value="1"/>
</dbReference>
<dbReference type="Pfam" id="PF02705">
    <property type="entry name" value="K_trans"/>
    <property type="match status" value="1"/>
</dbReference>
<dbReference type="Pfam" id="PF22776">
    <property type="entry name" value="K_trans_C"/>
    <property type="match status" value="1"/>
</dbReference>
<proteinExistence type="inferred from homology"/>
<keyword id="KW-0997">Cell inner membrane</keyword>
<keyword id="KW-1003">Cell membrane</keyword>
<keyword id="KW-0406">Ion transport</keyword>
<keyword id="KW-0472">Membrane</keyword>
<keyword id="KW-0630">Potassium</keyword>
<keyword id="KW-0633">Potassium transport</keyword>
<keyword id="KW-1185">Reference proteome</keyword>
<keyword id="KW-0769">Symport</keyword>
<keyword id="KW-0812">Transmembrane</keyword>
<keyword id="KW-1133">Transmembrane helix</keyword>
<keyword id="KW-0813">Transport</keyword>
<organism>
    <name type="scientific">Agrobacterium fabrum (strain C58 / ATCC 33970)</name>
    <name type="common">Agrobacterium tumefaciens (strain C58)</name>
    <dbReference type="NCBI Taxonomy" id="176299"/>
    <lineage>
        <taxon>Bacteria</taxon>
        <taxon>Pseudomonadati</taxon>
        <taxon>Pseudomonadota</taxon>
        <taxon>Alphaproteobacteria</taxon>
        <taxon>Hyphomicrobiales</taxon>
        <taxon>Rhizobiaceae</taxon>
        <taxon>Rhizobium/Agrobacterium group</taxon>
        <taxon>Agrobacterium</taxon>
        <taxon>Agrobacterium tumefaciens complex</taxon>
    </lineage>
</organism>
<feature type="chain" id="PRO_0000208988" description="Probable potassium transport system protein Kup 1">
    <location>
        <begin position="1"/>
        <end position="639"/>
    </location>
</feature>
<feature type="transmembrane region" description="Helical" evidence="1">
    <location>
        <begin position="27"/>
        <end position="47"/>
    </location>
</feature>
<feature type="transmembrane region" description="Helical" evidence="1">
    <location>
        <begin position="64"/>
        <end position="84"/>
    </location>
</feature>
<feature type="transmembrane region" description="Helical" evidence="1">
    <location>
        <begin position="115"/>
        <end position="135"/>
    </location>
</feature>
<feature type="transmembrane region" description="Helical" evidence="1">
    <location>
        <begin position="151"/>
        <end position="171"/>
    </location>
</feature>
<feature type="transmembrane region" description="Helical" evidence="1">
    <location>
        <begin position="182"/>
        <end position="202"/>
    </location>
</feature>
<feature type="transmembrane region" description="Helical" evidence="1">
    <location>
        <begin position="225"/>
        <end position="245"/>
    </location>
</feature>
<feature type="transmembrane region" description="Helical" evidence="1">
    <location>
        <begin position="261"/>
        <end position="281"/>
    </location>
</feature>
<feature type="transmembrane region" description="Helical" evidence="1">
    <location>
        <begin position="293"/>
        <end position="313"/>
    </location>
</feature>
<feature type="transmembrane region" description="Helical" evidence="1">
    <location>
        <begin position="351"/>
        <end position="371"/>
    </location>
</feature>
<feature type="transmembrane region" description="Helical" evidence="1">
    <location>
        <begin position="377"/>
        <end position="397"/>
    </location>
</feature>
<feature type="transmembrane region" description="Helical" evidence="1">
    <location>
        <begin position="408"/>
        <end position="428"/>
    </location>
</feature>
<feature type="transmembrane region" description="Helical" evidence="1">
    <location>
        <begin position="430"/>
        <end position="450"/>
    </location>
</feature>
<name>KUP1_AGRFC</name>
<sequence>MSQIADKDVAEKPDADDSHKNKGLYAAILGSIGVVYGDIGTSPLYAFREALKPIAYDGVTREEVIGLTSLMIWSLTIIVTFKYITLLLRADNDGEGGTLSLLALLMKTAGTHRSVLIVLGLIGAALFLGDAMITPALSVLSAVEGLKLVTPAMDDFIIPISVCILIGLFAIQSHGTGTVAKFFGPITAVWFLVMGGAGLIHIADDFGILFAFNPWHAVEFLANEGFYGVVVLGAVFLTITGAEALYADLGHFGRRPIQWAWFCLVFPALTLNYLGQGALVLKDPAAMSNPFYLMFPQWAILPAVILATAATIIASQAVITGAFSLVRQAIHLGYLPRMEILFTSETNTGQIYLPAVNTILLFGVVALVLTFKSSDALATAYGISVTGAMVVTSLMFFEFVRKRWQWSIWLALAVLTPLLLLELIFLGANLLKIHDGGYVPVLLAIAFTVIMTTWQRGSRILFAKTRRGDVPLKAFVASVEKESAHAPVRVPGTAIFLTGDPEAAPAALLHNLKHNHVLHDKNVILTIRTEDQPRVRPEDRYTLTKLSDRFAVVELHFGFMETQNVTQALGYLRRTGYKFDIMSTSFYLGRRKLVPDPKSGMPGWQNRLFIALAETAADPSDYFRLPANRVVELGSHVVV</sequence>
<gene>
    <name evidence="1" type="primary">kup1</name>
    <name type="ordered locus">Atu0711</name>
    <name type="ORF">AGR_C_1288</name>
</gene>
<comment type="function">
    <text evidence="1">Transport of potassium into the cell. Likely operates as a K(+):H(+) symporter.</text>
</comment>
<comment type="catalytic activity">
    <reaction evidence="1">
        <text>K(+)(in) + H(+)(in) = K(+)(out) + H(+)(out)</text>
        <dbReference type="Rhea" id="RHEA:28490"/>
        <dbReference type="ChEBI" id="CHEBI:15378"/>
        <dbReference type="ChEBI" id="CHEBI:29103"/>
    </reaction>
    <physiologicalReaction direction="right-to-left" evidence="1">
        <dbReference type="Rhea" id="RHEA:28492"/>
    </physiologicalReaction>
</comment>
<comment type="subcellular location">
    <subcellularLocation>
        <location evidence="1">Cell inner membrane</location>
        <topology evidence="1">Multi-pass membrane protein</topology>
    </subcellularLocation>
</comment>
<comment type="similarity">
    <text evidence="1">Belongs to the HAK/KUP transporter (TC 2.A.72) family.</text>
</comment>
<reference key="1">
    <citation type="journal article" date="2001" name="Science">
        <title>The genome of the natural genetic engineer Agrobacterium tumefaciens C58.</title>
        <authorList>
            <person name="Wood D.W."/>
            <person name="Setubal J.C."/>
            <person name="Kaul R."/>
            <person name="Monks D.E."/>
            <person name="Kitajima J.P."/>
            <person name="Okura V.K."/>
            <person name="Zhou Y."/>
            <person name="Chen L."/>
            <person name="Wood G.E."/>
            <person name="Almeida N.F. Jr."/>
            <person name="Woo L."/>
            <person name="Chen Y."/>
            <person name="Paulsen I.T."/>
            <person name="Eisen J.A."/>
            <person name="Karp P.D."/>
            <person name="Bovee D. Sr."/>
            <person name="Chapman P."/>
            <person name="Clendenning J."/>
            <person name="Deatherage G."/>
            <person name="Gillet W."/>
            <person name="Grant C."/>
            <person name="Kutyavin T."/>
            <person name="Levy R."/>
            <person name="Li M.-J."/>
            <person name="McClelland E."/>
            <person name="Palmieri A."/>
            <person name="Raymond C."/>
            <person name="Rouse G."/>
            <person name="Saenphimmachak C."/>
            <person name="Wu Z."/>
            <person name="Romero P."/>
            <person name="Gordon D."/>
            <person name="Zhang S."/>
            <person name="Yoo H."/>
            <person name="Tao Y."/>
            <person name="Biddle P."/>
            <person name="Jung M."/>
            <person name="Krespan W."/>
            <person name="Perry M."/>
            <person name="Gordon-Kamm B."/>
            <person name="Liao L."/>
            <person name="Kim S."/>
            <person name="Hendrick C."/>
            <person name="Zhao Z.-Y."/>
            <person name="Dolan M."/>
            <person name="Chumley F."/>
            <person name="Tingey S.V."/>
            <person name="Tomb J.-F."/>
            <person name="Gordon M.P."/>
            <person name="Olson M.V."/>
            <person name="Nester E.W."/>
        </authorList>
    </citation>
    <scope>NUCLEOTIDE SEQUENCE [LARGE SCALE GENOMIC DNA]</scope>
    <source>
        <strain>C58 / ATCC 33970</strain>
    </source>
</reference>
<reference key="2">
    <citation type="journal article" date="2001" name="Science">
        <title>Genome sequence of the plant pathogen and biotechnology agent Agrobacterium tumefaciens C58.</title>
        <authorList>
            <person name="Goodner B."/>
            <person name="Hinkle G."/>
            <person name="Gattung S."/>
            <person name="Miller N."/>
            <person name="Blanchard M."/>
            <person name="Qurollo B."/>
            <person name="Goldman B.S."/>
            <person name="Cao Y."/>
            <person name="Askenazi M."/>
            <person name="Halling C."/>
            <person name="Mullin L."/>
            <person name="Houmiel K."/>
            <person name="Gordon J."/>
            <person name="Vaudin M."/>
            <person name="Iartchouk O."/>
            <person name="Epp A."/>
            <person name="Liu F."/>
            <person name="Wollam C."/>
            <person name="Allinger M."/>
            <person name="Doughty D."/>
            <person name="Scott C."/>
            <person name="Lappas C."/>
            <person name="Markelz B."/>
            <person name="Flanagan C."/>
            <person name="Crowell C."/>
            <person name="Gurson J."/>
            <person name="Lomo C."/>
            <person name="Sear C."/>
            <person name="Strub G."/>
            <person name="Cielo C."/>
            <person name="Slater S."/>
        </authorList>
    </citation>
    <scope>NUCLEOTIDE SEQUENCE [LARGE SCALE GENOMIC DNA]</scope>
    <source>
        <strain>C58 / ATCC 33970</strain>
    </source>
</reference>